<gene>
    <name evidence="1" type="primary">argB</name>
    <name type="ordered locus">NMC1038</name>
</gene>
<sequence length="298" mass="31374">MESENIISAADKARILAEALPYIRRFSGSVAVIKYGGNAMTEPALKEGFARDVVLLKLVGIHPVIVHGGGPQINAMLEKVGKKGEFVQGMRVTDKEAMDIVEMVLGGHVNKEIVSMINTYGGHAVGVSGRDDHFIKAKKLLIDTPEQNGVDIGQVGTVESIDTGLVKGLIERGYIPVVAPVGVGEKGEAFNINADLVAGKLAEELNAEKLLMMTNIAGVMDKMGNLLTKLTPKRIDELIADGTLYGGMLPKIASAVEAAVNGVKATHIIDGRLPNALLLEIFTDAGIGSMILGGGEDA</sequence>
<reference key="1">
    <citation type="journal article" date="2007" name="PLoS Genet.">
        <title>Meningococcal genetic variation mechanisms viewed through comparative analysis of serogroup C strain FAM18.</title>
        <authorList>
            <person name="Bentley S.D."/>
            <person name="Vernikos G.S."/>
            <person name="Snyder L.A.S."/>
            <person name="Churcher C."/>
            <person name="Arrowsmith C."/>
            <person name="Chillingworth T."/>
            <person name="Cronin A."/>
            <person name="Davis P.H."/>
            <person name="Holroyd N.E."/>
            <person name="Jagels K."/>
            <person name="Maddison M."/>
            <person name="Moule S."/>
            <person name="Rabbinowitsch E."/>
            <person name="Sharp S."/>
            <person name="Unwin L."/>
            <person name="Whitehead S."/>
            <person name="Quail M.A."/>
            <person name="Achtman M."/>
            <person name="Barrell B.G."/>
            <person name="Saunders N.J."/>
            <person name="Parkhill J."/>
        </authorList>
    </citation>
    <scope>NUCLEOTIDE SEQUENCE [LARGE SCALE GENOMIC DNA]</scope>
    <source>
        <strain>ATCC 700532 / DSM 15464 / FAM18</strain>
    </source>
</reference>
<accession>A1KTW0</accession>
<protein>
    <recommendedName>
        <fullName evidence="1">Acetylglutamate kinase</fullName>
        <ecNumber evidence="1">2.7.2.8</ecNumber>
    </recommendedName>
    <alternativeName>
        <fullName evidence="1">N-acetyl-L-glutamate 5-phosphotransferase</fullName>
    </alternativeName>
    <alternativeName>
        <fullName evidence="1">NAG kinase</fullName>
        <shortName evidence="1">NAGK</shortName>
    </alternativeName>
</protein>
<dbReference type="EC" id="2.7.2.8" evidence="1"/>
<dbReference type="EMBL" id="AM421808">
    <property type="protein sequence ID" value="CAM10300.1"/>
    <property type="molecule type" value="Genomic_DNA"/>
</dbReference>
<dbReference type="RefSeq" id="WP_002226383.1">
    <property type="nucleotide sequence ID" value="NC_008767.1"/>
</dbReference>
<dbReference type="SMR" id="A1KTW0"/>
<dbReference type="KEGG" id="nmc:NMC1038"/>
<dbReference type="HOGENOM" id="CLU_053680_0_0_4"/>
<dbReference type="UniPathway" id="UPA00068">
    <property type="reaction ID" value="UER00107"/>
</dbReference>
<dbReference type="Proteomes" id="UP000002286">
    <property type="component" value="Chromosome"/>
</dbReference>
<dbReference type="GO" id="GO:0005737">
    <property type="term" value="C:cytoplasm"/>
    <property type="evidence" value="ECO:0007669"/>
    <property type="project" value="UniProtKB-SubCell"/>
</dbReference>
<dbReference type="GO" id="GO:0003991">
    <property type="term" value="F:acetylglutamate kinase activity"/>
    <property type="evidence" value="ECO:0007669"/>
    <property type="project" value="UniProtKB-UniRule"/>
</dbReference>
<dbReference type="GO" id="GO:0005524">
    <property type="term" value="F:ATP binding"/>
    <property type="evidence" value="ECO:0007669"/>
    <property type="project" value="UniProtKB-UniRule"/>
</dbReference>
<dbReference type="GO" id="GO:0042450">
    <property type="term" value="P:arginine biosynthetic process via ornithine"/>
    <property type="evidence" value="ECO:0007669"/>
    <property type="project" value="UniProtKB-UniRule"/>
</dbReference>
<dbReference type="GO" id="GO:0006526">
    <property type="term" value="P:L-arginine biosynthetic process"/>
    <property type="evidence" value="ECO:0007669"/>
    <property type="project" value="UniProtKB-UniPathway"/>
</dbReference>
<dbReference type="CDD" id="cd04250">
    <property type="entry name" value="AAK_NAGK-C"/>
    <property type="match status" value="1"/>
</dbReference>
<dbReference type="FunFam" id="3.40.1160.10:FF:000004">
    <property type="entry name" value="Acetylglutamate kinase"/>
    <property type="match status" value="1"/>
</dbReference>
<dbReference type="Gene3D" id="3.40.1160.10">
    <property type="entry name" value="Acetylglutamate kinase-like"/>
    <property type="match status" value="1"/>
</dbReference>
<dbReference type="HAMAP" id="MF_00082">
    <property type="entry name" value="ArgB"/>
    <property type="match status" value="1"/>
</dbReference>
<dbReference type="InterPro" id="IPR036393">
    <property type="entry name" value="AceGlu_kinase-like_sf"/>
</dbReference>
<dbReference type="InterPro" id="IPR004662">
    <property type="entry name" value="AcgluKinase_fam"/>
</dbReference>
<dbReference type="InterPro" id="IPR037528">
    <property type="entry name" value="ArgB"/>
</dbReference>
<dbReference type="InterPro" id="IPR001048">
    <property type="entry name" value="Asp/Glu/Uridylate_kinase"/>
</dbReference>
<dbReference type="InterPro" id="IPR001057">
    <property type="entry name" value="Glu/AcGlu_kinase"/>
</dbReference>
<dbReference type="InterPro" id="IPR041727">
    <property type="entry name" value="NAGK-C"/>
</dbReference>
<dbReference type="NCBIfam" id="TIGR00761">
    <property type="entry name" value="argB"/>
    <property type="match status" value="1"/>
</dbReference>
<dbReference type="PANTHER" id="PTHR23342">
    <property type="entry name" value="N-ACETYLGLUTAMATE SYNTHASE"/>
    <property type="match status" value="1"/>
</dbReference>
<dbReference type="PANTHER" id="PTHR23342:SF0">
    <property type="entry name" value="N-ACETYLGLUTAMATE SYNTHASE, MITOCHONDRIAL"/>
    <property type="match status" value="1"/>
</dbReference>
<dbReference type="Pfam" id="PF00696">
    <property type="entry name" value="AA_kinase"/>
    <property type="match status" value="1"/>
</dbReference>
<dbReference type="PIRSF" id="PIRSF000728">
    <property type="entry name" value="NAGK"/>
    <property type="match status" value="1"/>
</dbReference>
<dbReference type="PRINTS" id="PR00474">
    <property type="entry name" value="GLU5KINASE"/>
</dbReference>
<dbReference type="SUPFAM" id="SSF53633">
    <property type="entry name" value="Carbamate kinase-like"/>
    <property type="match status" value="1"/>
</dbReference>
<organism>
    <name type="scientific">Neisseria meningitidis serogroup C / serotype 2a (strain ATCC 700532 / DSM 15464 / FAM18)</name>
    <dbReference type="NCBI Taxonomy" id="272831"/>
    <lineage>
        <taxon>Bacteria</taxon>
        <taxon>Pseudomonadati</taxon>
        <taxon>Pseudomonadota</taxon>
        <taxon>Betaproteobacteria</taxon>
        <taxon>Neisseriales</taxon>
        <taxon>Neisseriaceae</taxon>
        <taxon>Neisseria</taxon>
    </lineage>
</organism>
<feature type="chain" id="PRO_1000010517" description="Acetylglutamate kinase">
    <location>
        <begin position="1"/>
        <end position="298"/>
    </location>
</feature>
<feature type="binding site" evidence="1">
    <location>
        <begin position="69"/>
        <end position="70"/>
    </location>
    <ligand>
        <name>substrate</name>
    </ligand>
</feature>
<feature type="binding site" evidence="1">
    <location>
        <position position="91"/>
    </location>
    <ligand>
        <name>substrate</name>
    </ligand>
</feature>
<feature type="binding site" evidence="1">
    <location>
        <position position="191"/>
    </location>
    <ligand>
        <name>substrate</name>
    </ligand>
</feature>
<feature type="site" description="Transition state stabilizer" evidence="1">
    <location>
        <position position="34"/>
    </location>
</feature>
<feature type="site" description="Transition state stabilizer" evidence="1">
    <location>
        <position position="251"/>
    </location>
</feature>
<name>ARGB_NEIMF</name>
<proteinExistence type="inferred from homology"/>
<comment type="function">
    <text evidence="1">Catalyzes the ATP-dependent phosphorylation of N-acetyl-L-glutamate.</text>
</comment>
<comment type="catalytic activity">
    <reaction evidence="1">
        <text>N-acetyl-L-glutamate + ATP = N-acetyl-L-glutamyl 5-phosphate + ADP</text>
        <dbReference type="Rhea" id="RHEA:14629"/>
        <dbReference type="ChEBI" id="CHEBI:30616"/>
        <dbReference type="ChEBI" id="CHEBI:44337"/>
        <dbReference type="ChEBI" id="CHEBI:57936"/>
        <dbReference type="ChEBI" id="CHEBI:456216"/>
        <dbReference type="EC" id="2.7.2.8"/>
    </reaction>
</comment>
<comment type="pathway">
    <text evidence="1">Amino-acid biosynthesis; L-arginine biosynthesis; N(2)-acetyl-L-ornithine from L-glutamate: step 2/4.</text>
</comment>
<comment type="subcellular location">
    <subcellularLocation>
        <location evidence="1">Cytoplasm</location>
    </subcellularLocation>
</comment>
<comment type="similarity">
    <text evidence="1">Belongs to the acetylglutamate kinase family. ArgB subfamily.</text>
</comment>
<keyword id="KW-0028">Amino-acid biosynthesis</keyword>
<keyword id="KW-0055">Arginine biosynthesis</keyword>
<keyword id="KW-0067">ATP-binding</keyword>
<keyword id="KW-0963">Cytoplasm</keyword>
<keyword id="KW-0418">Kinase</keyword>
<keyword id="KW-0547">Nucleotide-binding</keyword>
<keyword id="KW-0808">Transferase</keyword>
<evidence type="ECO:0000255" key="1">
    <source>
        <dbReference type="HAMAP-Rule" id="MF_00082"/>
    </source>
</evidence>